<comment type="function">
    <text evidence="1">Heme-binding protein able to scavenge peroxynitrite and to protect free L-tyrosine against peroxynitrite-mediated nitration, by acting as a peroxynitrite isomerase that converts peroxynitrite to nitrate. Therefore, this protein likely plays a role in peroxynitrite sensing and in the detoxification of reactive nitrogen and oxygen species (RNS and ROS, respectively). Is able to bind nitric oxide (NO) in vitro, but may act as a sensor of peroxynitrite levels in vivo.</text>
</comment>
<comment type="catalytic activity">
    <reaction evidence="1">
        <text>peroxynitrite = nitrate</text>
        <dbReference type="Rhea" id="RHEA:63116"/>
        <dbReference type="ChEBI" id="CHEBI:17632"/>
        <dbReference type="ChEBI" id="CHEBI:25941"/>
    </reaction>
    <physiologicalReaction direction="left-to-right" evidence="1">
        <dbReference type="Rhea" id="RHEA:63117"/>
    </physiologicalReaction>
</comment>
<comment type="cofactor">
    <cofactor evidence="1">
        <name>heme b</name>
        <dbReference type="ChEBI" id="CHEBI:60344"/>
    </cofactor>
    <text evidence="1">Binds 1 heme b group per subunit, that coordinates a highly solvent-exposed Fe(III) atom.</text>
</comment>
<comment type="pathway">
    <text evidence="1">Nitrogen metabolism.</text>
</comment>
<comment type="subunit">
    <text evidence="1">Homodimer.</text>
</comment>
<comment type="domain">
    <text evidence="1">Forms a 10-stranded antiparallel beta-barrel structure able to accommodate a hydrophobic ligand in its interior. In fact, this fold hosts the heme group, which is located in a wide surface cleft.</text>
</comment>
<comment type="similarity">
    <text evidence="1">Belongs to the nitrobindin family.</text>
</comment>
<organism>
    <name type="scientific">Clavibacter sepedonicus</name>
    <name type="common">Clavibacter michiganensis subsp. sepedonicus</name>
    <dbReference type="NCBI Taxonomy" id="31964"/>
    <lineage>
        <taxon>Bacteria</taxon>
        <taxon>Bacillati</taxon>
        <taxon>Actinomycetota</taxon>
        <taxon>Actinomycetes</taxon>
        <taxon>Micrococcales</taxon>
        <taxon>Microbacteriaceae</taxon>
        <taxon>Clavibacter</taxon>
    </lineage>
</organism>
<keyword id="KW-0349">Heme</keyword>
<keyword id="KW-0408">Iron</keyword>
<keyword id="KW-0413">Isomerase</keyword>
<keyword id="KW-0479">Metal-binding</keyword>
<feature type="chain" id="PRO_0000356898" description="Peroxynitrite isomerase">
    <location>
        <begin position="1"/>
        <end position="199"/>
    </location>
</feature>
<feature type="short sequence motif" description="GXWXGXG" evidence="1">
    <location>
        <begin position="20"/>
        <end position="26"/>
    </location>
</feature>
<feature type="binding site" evidence="1">
    <location>
        <position position="158"/>
    </location>
    <ligand>
        <name>heme b</name>
        <dbReference type="ChEBI" id="CHEBI:60344"/>
    </ligand>
</feature>
<feature type="binding site" description="axial binding residue" evidence="1">
    <location>
        <position position="190"/>
    </location>
    <ligand>
        <name>heme b</name>
        <dbReference type="ChEBI" id="CHEBI:60344"/>
    </ligand>
    <ligandPart>
        <name>Fe</name>
        <dbReference type="ChEBI" id="CHEBI:18248"/>
    </ligandPart>
</feature>
<gene>
    <name type="ordered locus">CMS2734</name>
</gene>
<dbReference type="EC" id="5.99.-.-" evidence="1"/>
<dbReference type="EMBL" id="AM849034">
    <property type="protein sequence ID" value="CAQ02806.1"/>
    <property type="molecule type" value="Genomic_DNA"/>
</dbReference>
<dbReference type="RefSeq" id="WP_012299974.1">
    <property type="nucleotide sequence ID" value="NZ_MZMN01000003.1"/>
</dbReference>
<dbReference type="SMR" id="B0RAV9"/>
<dbReference type="STRING" id="31964.CMS2734"/>
<dbReference type="KEGG" id="cms:CMS2734"/>
<dbReference type="eggNOG" id="COG3485">
    <property type="taxonomic scope" value="Bacteria"/>
</dbReference>
<dbReference type="HOGENOM" id="CLU_085483_0_1_11"/>
<dbReference type="OrthoDB" id="4804006at2"/>
<dbReference type="Proteomes" id="UP000001318">
    <property type="component" value="Chromosome"/>
</dbReference>
<dbReference type="GO" id="GO:0020037">
    <property type="term" value="F:heme binding"/>
    <property type="evidence" value="ECO:0007669"/>
    <property type="project" value="UniProtKB-UniRule"/>
</dbReference>
<dbReference type="GO" id="GO:0046872">
    <property type="term" value="F:metal ion binding"/>
    <property type="evidence" value="ECO:0007669"/>
    <property type="project" value="UniProtKB-KW"/>
</dbReference>
<dbReference type="GO" id="GO:0062213">
    <property type="term" value="F:peroxynitrite isomerase activity"/>
    <property type="evidence" value="ECO:0007669"/>
    <property type="project" value="UniProtKB-UniRule"/>
</dbReference>
<dbReference type="CDD" id="cd07828">
    <property type="entry name" value="lipocalin_heme-bd-THAP4-like"/>
    <property type="match status" value="1"/>
</dbReference>
<dbReference type="Gene3D" id="2.40.128.20">
    <property type="match status" value="1"/>
</dbReference>
<dbReference type="HAMAP" id="MF_01297">
    <property type="entry name" value="nitrobindin"/>
    <property type="match status" value="1"/>
</dbReference>
<dbReference type="InterPro" id="IPR012674">
    <property type="entry name" value="Calycin"/>
</dbReference>
<dbReference type="InterPro" id="IPR022939">
    <property type="entry name" value="Nb(III)_bact/plant"/>
</dbReference>
<dbReference type="InterPro" id="IPR045165">
    <property type="entry name" value="Nitrobindin"/>
</dbReference>
<dbReference type="InterPro" id="IPR014878">
    <property type="entry name" value="THAP4-like_heme-bd"/>
</dbReference>
<dbReference type="PANTHER" id="PTHR15854:SF4">
    <property type="entry name" value="PEROXYNITRITE ISOMERASE THAP4"/>
    <property type="match status" value="1"/>
</dbReference>
<dbReference type="PANTHER" id="PTHR15854">
    <property type="entry name" value="THAP4 PROTEIN"/>
    <property type="match status" value="1"/>
</dbReference>
<dbReference type="Pfam" id="PF08768">
    <property type="entry name" value="THAP4_heme-bd"/>
    <property type="match status" value="1"/>
</dbReference>
<dbReference type="SUPFAM" id="SSF50814">
    <property type="entry name" value="Lipocalins"/>
    <property type="match status" value="1"/>
</dbReference>
<proteinExistence type="inferred from homology"/>
<sequence>MIEIPTGLPAELVPLSWLLGVWEGSGVVEYAVGDETVRREFGQRISFSHDGLPHLNYSSYAWIEGDDGPVPFVTETGYWRLRRRVTDGDPGPAMLPPTDERPFTTAEEVETLCNADGGFDVEVALVHPGGVSELYVGQVKSARIDLATDAVLRTEGAKSYTGATRLYGFVERDLLWAWDIAALGQPLRTHASGRVSHVD</sequence>
<name>NB_CLASE</name>
<reference key="1">
    <citation type="journal article" date="2008" name="J. Bacteriol.">
        <title>Genome of the actinomycete plant pathogen Clavibacter michiganensis subsp. sepedonicus suggests recent niche adaptation.</title>
        <authorList>
            <person name="Bentley S.D."/>
            <person name="Corton C."/>
            <person name="Brown S.E."/>
            <person name="Barron A."/>
            <person name="Clark L."/>
            <person name="Doggett J."/>
            <person name="Harris B."/>
            <person name="Ormond D."/>
            <person name="Quail M.A."/>
            <person name="May G."/>
            <person name="Francis D."/>
            <person name="Knudson D."/>
            <person name="Parkhill J."/>
            <person name="Ishimaru C.A."/>
        </authorList>
    </citation>
    <scope>NUCLEOTIDE SEQUENCE [LARGE SCALE GENOMIC DNA]</scope>
    <source>
        <strain>ATCC 33113 / DSM 20744 / JCM 9667 / LMG 2889 / ICMP 2535 / C-1</strain>
    </source>
</reference>
<evidence type="ECO:0000255" key="1">
    <source>
        <dbReference type="HAMAP-Rule" id="MF_01297"/>
    </source>
</evidence>
<protein>
    <recommendedName>
        <fullName>Peroxynitrite isomerase</fullName>
        <ecNumber evidence="1">5.99.-.-</ecNumber>
    </recommendedName>
    <alternativeName>
        <fullName>Ferric nitrobindin</fullName>
        <shortName>Nb(III)</shortName>
    </alternativeName>
</protein>
<accession>B0RAV9</accession>